<feature type="chain" id="PRO_0000356339" description="Snaclec B8">
    <location>
        <begin position="1" status="less than"/>
        <end position="130"/>
    </location>
</feature>
<feature type="domain" description="C-type lectin" evidence="2">
    <location>
        <begin position="9"/>
        <end position="125"/>
    </location>
</feature>
<feature type="disulfide bond" evidence="2">
    <location>
        <begin position="2"/>
        <end position="13"/>
    </location>
</feature>
<feature type="disulfide bond" evidence="2">
    <location>
        <begin position="30"/>
        <end position="124"/>
    </location>
</feature>
<feature type="disulfide bond" description="Interchain" evidence="2">
    <location>
        <position position="77"/>
    </location>
</feature>
<feature type="disulfide bond" evidence="2">
    <location>
        <begin position="99"/>
        <end position="116"/>
    </location>
</feature>
<feature type="non-terminal residue">
    <location>
        <position position="1"/>
    </location>
</feature>
<reference key="1">
    <citation type="journal article" date="2009" name="Toxicon">
        <title>C-type lectin protein isoforms of Macrovipera lebetina: cDNA cloning and genetic diversity.</title>
        <authorList>
            <person name="Jebali J."/>
            <person name="Bazaa A."/>
            <person name="Sarray S."/>
            <person name="Benhaj K."/>
            <person name="Karboul A."/>
            <person name="El Ayeb M."/>
            <person name="Marrakchi N."/>
            <person name="Gargouri A."/>
        </authorList>
    </citation>
    <scope>NUCLEOTIDE SEQUENCE [MRNA]</scope>
</reference>
<keyword id="KW-1015">Disulfide bond</keyword>
<keyword id="KW-1199">Hemostasis impairing toxin</keyword>
<keyword id="KW-0964">Secreted</keyword>
<keyword id="KW-0800">Toxin</keyword>
<comment type="function">
    <text evidence="1">Interferes with one step of hemostasis (modulation of platelet aggregation, or coagulation cascade, for example).</text>
</comment>
<comment type="subunit">
    <text evidence="1">Heterodimer; disulfide-linked.</text>
</comment>
<comment type="subcellular location">
    <subcellularLocation>
        <location evidence="1">Secreted</location>
    </subcellularLocation>
</comment>
<comment type="tissue specificity">
    <text>Expressed by the venom gland.</text>
</comment>
<comment type="miscellaneous">
    <text>Shows greater sequence similarity to the beta than alpha subunits compared to other heterodimer snaclecs.</text>
</comment>
<comment type="similarity">
    <text evidence="3">Belongs to the snaclec family.</text>
</comment>
<proteinExistence type="evidence at transcript level"/>
<organism>
    <name type="scientific">Macrovipera lebetinus</name>
    <name type="common">Levantine viper</name>
    <name type="synonym">Vipera lebetina</name>
    <dbReference type="NCBI Taxonomy" id="3148341"/>
    <lineage>
        <taxon>Eukaryota</taxon>
        <taxon>Metazoa</taxon>
        <taxon>Chordata</taxon>
        <taxon>Craniata</taxon>
        <taxon>Vertebrata</taxon>
        <taxon>Euteleostomi</taxon>
        <taxon>Lepidosauria</taxon>
        <taxon>Squamata</taxon>
        <taxon>Bifurcata</taxon>
        <taxon>Unidentata</taxon>
        <taxon>Episquamata</taxon>
        <taxon>Toxicofera</taxon>
        <taxon>Serpentes</taxon>
        <taxon>Colubroidea</taxon>
        <taxon>Viperidae</taxon>
        <taxon>Viperinae</taxon>
        <taxon>Macrovipera</taxon>
    </lineage>
</organism>
<name>SLB8_MACLB</name>
<protein>
    <recommendedName>
        <fullName>Snaclec B8</fullName>
    </recommendedName>
    <alternativeName>
        <fullName>C-type lectin B8</fullName>
    </alternativeName>
</protein>
<dbReference type="EMBL" id="EU085469">
    <property type="protein sequence ID" value="ABW82679.1"/>
    <property type="molecule type" value="mRNA"/>
</dbReference>
<dbReference type="SMR" id="B4XT07"/>
<dbReference type="GO" id="GO:0005576">
    <property type="term" value="C:extracellular region"/>
    <property type="evidence" value="ECO:0007669"/>
    <property type="project" value="UniProtKB-SubCell"/>
</dbReference>
<dbReference type="GO" id="GO:0090729">
    <property type="term" value="F:toxin activity"/>
    <property type="evidence" value="ECO:0007669"/>
    <property type="project" value="UniProtKB-KW"/>
</dbReference>
<dbReference type="FunFam" id="3.10.100.10:FF:000087">
    <property type="entry name" value="Snaclec rhodocetin subunit delta"/>
    <property type="match status" value="1"/>
</dbReference>
<dbReference type="Gene3D" id="3.10.100.10">
    <property type="entry name" value="Mannose-Binding Protein A, subunit A"/>
    <property type="match status" value="1"/>
</dbReference>
<dbReference type="InterPro" id="IPR001304">
    <property type="entry name" value="C-type_lectin-like"/>
</dbReference>
<dbReference type="InterPro" id="IPR016186">
    <property type="entry name" value="C-type_lectin-like/link_sf"/>
</dbReference>
<dbReference type="InterPro" id="IPR050111">
    <property type="entry name" value="C-type_lectin/snaclec_domain"/>
</dbReference>
<dbReference type="InterPro" id="IPR016187">
    <property type="entry name" value="CTDL_fold"/>
</dbReference>
<dbReference type="PANTHER" id="PTHR22803">
    <property type="entry name" value="MANNOSE, PHOSPHOLIPASE, LECTIN RECEPTOR RELATED"/>
    <property type="match status" value="1"/>
</dbReference>
<dbReference type="Pfam" id="PF00059">
    <property type="entry name" value="Lectin_C"/>
    <property type="match status" value="1"/>
</dbReference>
<dbReference type="SMART" id="SM00034">
    <property type="entry name" value="CLECT"/>
    <property type="match status" value="1"/>
</dbReference>
<dbReference type="SUPFAM" id="SSF56436">
    <property type="entry name" value="C-type lectin-like"/>
    <property type="match status" value="1"/>
</dbReference>
<dbReference type="PROSITE" id="PS50041">
    <property type="entry name" value="C_TYPE_LECTIN_2"/>
    <property type="match status" value="1"/>
</dbReference>
<sequence length="130" mass="15283">DCPWDWSSHEGHCYKVFKFATTWEDAEKFCTEQARGGHLISIKSTEEVDFMIKLAYPILKANLVWIGLRVEDFWRDCHMGWRDHANLLSKPGVVHNTKCFGLDQKTGYRTWVALRCELAYHFICMSRVPR</sequence>
<accession>B4XT07</accession>
<evidence type="ECO:0000250" key="1"/>
<evidence type="ECO:0000255" key="2">
    <source>
        <dbReference type="PROSITE-ProRule" id="PRU00040"/>
    </source>
</evidence>
<evidence type="ECO:0000305" key="3"/>